<keyword id="KW-0002">3D-structure</keyword>
<keyword id="KW-0025">Alternative splicing</keyword>
<keyword id="KW-0472">Membrane</keyword>
<keyword id="KW-0496">Mitochondrion</keyword>
<keyword id="KW-1000">Mitochondrion outer membrane</keyword>
<keyword id="KW-0597">Phosphoprotein</keyword>
<keyword id="KW-1185">Reference proteome</keyword>
<keyword id="KW-0812">Transmembrane</keyword>
<keyword id="KW-1133">Transmembrane helix</keyword>
<dbReference type="EMBL" id="AK077618">
    <property type="protein sequence ID" value="BAC36904.1"/>
    <property type="molecule type" value="mRNA"/>
</dbReference>
<dbReference type="EMBL" id="AK140122">
    <property type="protein sequence ID" value="BAE24244.1"/>
    <property type="molecule type" value="mRNA"/>
</dbReference>
<dbReference type="EMBL" id="AK154200">
    <property type="protein sequence ID" value="BAE32434.1"/>
    <property type="status" value="ALT_INIT"/>
    <property type="molecule type" value="mRNA"/>
</dbReference>
<dbReference type="EMBL" id="AL954388">
    <property type="status" value="NOT_ANNOTATED_CDS"/>
    <property type="molecule type" value="Genomic_DNA"/>
</dbReference>
<dbReference type="EMBL" id="BC051404">
    <property type="protein sequence ID" value="AAH51404.1"/>
    <property type="molecule type" value="mRNA"/>
</dbReference>
<dbReference type="CCDS" id="CCDS15880.1">
    <molecule id="Q8BK03-1"/>
</dbReference>
<dbReference type="RefSeq" id="NP_001229336.1">
    <molecule id="Q8BK03-1"/>
    <property type="nucleotide sequence ID" value="NM_001242407.2"/>
</dbReference>
<dbReference type="RefSeq" id="NP_780601.1">
    <molecule id="Q8BK03-1"/>
    <property type="nucleotide sequence ID" value="NM_175392.3"/>
</dbReference>
<dbReference type="PDB" id="7X14">
    <property type="method" value="X-ray"/>
    <property type="resolution" value="1.68 A"/>
    <property type="chains" value="B=289-298"/>
</dbReference>
<dbReference type="PDBsum" id="7X14"/>
<dbReference type="SMR" id="Q8BK03"/>
<dbReference type="FunCoup" id="Q8BK03">
    <property type="interactions" value="1343"/>
</dbReference>
<dbReference type="STRING" id="10090.ENSMUSP00000097787"/>
<dbReference type="GlyGen" id="Q8BK03">
    <property type="glycosylation" value="1 site"/>
</dbReference>
<dbReference type="iPTMnet" id="Q8BK03"/>
<dbReference type="PhosphoSitePlus" id="Q8BK03"/>
<dbReference type="jPOST" id="Q8BK03"/>
<dbReference type="PaxDb" id="10090-ENSMUSP00000097787"/>
<dbReference type="PeptideAtlas" id="Q8BK03"/>
<dbReference type="ProteomicsDB" id="295909">
    <molecule id="Q8BK03-1"/>
</dbReference>
<dbReference type="ProteomicsDB" id="295910">
    <molecule id="Q8BK03-2"/>
</dbReference>
<dbReference type="Pumba" id="Q8BK03"/>
<dbReference type="Antibodypedia" id="50430">
    <property type="antibodies" value="18 antibodies from 10 providers"/>
</dbReference>
<dbReference type="Ensembl" id="ENSMUST00000077977.14">
    <molecule id="Q8BK03-1"/>
    <property type="protein sequence ID" value="ENSMUSP00000077127.8"/>
    <property type="gene ID" value="ENSMUSG00000026858.19"/>
</dbReference>
<dbReference type="Ensembl" id="ENSMUST00000100214.10">
    <molecule id="Q8BK03-1"/>
    <property type="protein sequence ID" value="ENSMUSP00000097787.4"/>
    <property type="gene ID" value="ENSMUSG00000026858.19"/>
</dbReference>
<dbReference type="Ensembl" id="ENSMUST00000140075.9">
    <molecule id="Q8BK03-2"/>
    <property type="protein sequence ID" value="ENSMUSP00000135519.2"/>
    <property type="gene ID" value="ENSMUSG00000026858.19"/>
</dbReference>
<dbReference type="GeneID" id="108958"/>
<dbReference type="KEGG" id="mmu:108958"/>
<dbReference type="UCSC" id="uc008jcf.2">
    <molecule id="Q8BK03-2"/>
    <property type="organism name" value="mouse"/>
</dbReference>
<dbReference type="UCSC" id="uc008jcg.2">
    <molecule id="Q8BK03-1"/>
    <property type="organism name" value="mouse"/>
</dbReference>
<dbReference type="AGR" id="MGI:1922035"/>
<dbReference type="CTD" id="84895"/>
<dbReference type="MGI" id="MGI:1922035">
    <property type="gene designation" value="Miga2"/>
</dbReference>
<dbReference type="VEuPathDB" id="HostDB:ENSMUSG00000026858"/>
<dbReference type="eggNOG" id="KOG3831">
    <property type="taxonomic scope" value="Eukaryota"/>
</dbReference>
<dbReference type="GeneTree" id="ENSGT00390000008565"/>
<dbReference type="HOGENOM" id="CLU_031519_2_1_1"/>
<dbReference type="InParanoid" id="Q8BK03"/>
<dbReference type="OMA" id="AHFYVIS"/>
<dbReference type="OrthoDB" id="8880065at2759"/>
<dbReference type="PhylomeDB" id="Q8BK03"/>
<dbReference type="TreeFam" id="TF313896"/>
<dbReference type="Reactome" id="R-MMU-1483166">
    <property type="pathway name" value="Synthesis of PA"/>
</dbReference>
<dbReference type="BioGRID-ORCS" id="108958">
    <property type="hits" value="6 hits in 78 CRISPR screens"/>
</dbReference>
<dbReference type="ChiTaRS" id="Fam73b">
    <property type="organism name" value="mouse"/>
</dbReference>
<dbReference type="PRO" id="PR:Q8BK03"/>
<dbReference type="Proteomes" id="UP000000589">
    <property type="component" value="Chromosome 2"/>
</dbReference>
<dbReference type="RNAct" id="Q8BK03">
    <property type="molecule type" value="protein"/>
</dbReference>
<dbReference type="Bgee" id="ENSMUSG00000026858">
    <property type="expression patterns" value="Expressed in brown adipose tissue and 260 other cell types or tissues"/>
</dbReference>
<dbReference type="ExpressionAtlas" id="Q8BK03">
    <property type="expression patterns" value="baseline and differential"/>
</dbReference>
<dbReference type="GO" id="GO:0005741">
    <property type="term" value="C:mitochondrial outer membrane"/>
    <property type="evidence" value="ECO:0007669"/>
    <property type="project" value="UniProtKB-SubCell"/>
</dbReference>
<dbReference type="GO" id="GO:0005886">
    <property type="term" value="C:plasma membrane"/>
    <property type="evidence" value="ECO:0000250"/>
    <property type="project" value="UniProtKB"/>
</dbReference>
<dbReference type="GO" id="GO:0046982">
    <property type="term" value="F:protein heterodimerization activity"/>
    <property type="evidence" value="ECO:0000250"/>
    <property type="project" value="UniProtKB"/>
</dbReference>
<dbReference type="GO" id="GO:0042803">
    <property type="term" value="F:protein homodimerization activity"/>
    <property type="evidence" value="ECO:0000250"/>
    <property type="project" value="UniProtKB"/>
</dbReference>
<dbReference type="GO" id="GO:0060348">
    <property type="term" value="P:bone development"/>
    <property type="evidence" value="ECO:0000315"/>
    <property type="project" value="MGI"/>
</dbReference>
<dbReference type="GO" id="GO:0008053">
    <property type="term" value="P:mitochondrial fusion"/>
    <property type="evidence" value="ECO:0000315"/>
    <property type="project" value="UniProtKB"/>
</dbReference>
<dbReference type="InterPro" id="IPR019392">
    <property type="entry name" value="Miga"/>
</dbReference>
<dbReference type="PANTHER" id="PTHR21508">
    <property type="entry name" value="MITOGUARDIN"/>
    <property type="match status" value="1"/>
</dbReference>
<dbReference type="PANTHER" id="PTHR21508:SF4">
    <property type="entry name" value="MITOGUARDIN 2"/>
    <property type="match status" value="1"/>
</dbReference>
<dbReference type="Pfam" id="PF10265">
    <property type="entry name" value="Miga"/>
    <property type="match status" value="1"/>
</dbReference>
<evidence type="ECO:0000250" key="1">
    <source>
        <dbReference type="UniProtKB" id="Q7L4E1"/>
    </source>
</evidence>
<evidence type="ECO:0000255" key="2"/>
<evidence type="ECO:0000256" key="3">
    <source>
        <dbReference type="SAM" id="MobiDB-lite"/>
    </source>
</evidence>
<evidence type="ECO:0000269" key="4">
    <source>
    </source>
</evidence>
<evidence type="ECO:0000269" key="5">
    <source>
    </source>
</evidence>
<evidence type="ECO:0000303" key="6">
    <source>
    </source>
</evidence>
<evidence type="ECO:0000305" key="7"/>
<evidence type="ECO:0000312" key="8">
    <source>
        <dbReference type="MGI" id="MGI:1922035"/>
    </source>
</evidence>
<evidence type="ECO:0007744" key="9">
    <source>
    </source>
</evidence>
<evidence type="ECO:0007744" key="10">
    <source>
    </source>
</evidence>
<protein>
    <recommendedName>
        <fullName evidence="1">Mitoguardin 2</fullName>
    </recommendedName>
    <alternativeName>
        <fullName>Protein FAM73B</fullName>
    </alternativeName>
</protein>
<comment type="function">
    <text evidence="1 4">Regulator of mitochondrial fusion (PubMed:26711011). Acts by forming homo- and heterodimers at the mitochondrial outer membrane and facilitating the formation of PLD6/MitoPLD dimers. May act by regulating phospholipid metabolism via PLD6/MitoPLD (By similarity).</text>
</comment>
<comment type="subunit">
    <text evidence="1">Homodimer and heterodimer; forms heterodimers with MIGA1. Interacts with PLD6/MitoPLD. Interacts (via phosphorylated FFAT motif) with MOSPD2 (By similarity).</text>
</comment>
<comment type="subcellular location">
    <subcellularLocation>
        <location evidence="1">Mitochondrion outer membrane</location>
        <topology evidence="2">Multi-pass membrane protein</topology>
    </subcellularLocation>
</comment>
<comment type="alternative products">
    <event type="alternative splicing"/>
    <isoform>
        <id>Q8BK03-1</id>
        <name>1</name>
        <sequence type="displayed"/>
    </isoform>
    <isoform>
        <id>Q8BK03-2</id>
        <name>2</name>
        <sequence type="described" ref="VSP_030093 VSP_030094"/>
    </isoform>
</comment>
<comment type="domain">
    <text evidence="1">The FFAT motif is involved in the interaction with MOSPD2 and its phosphorylation regulates this interaction.</text>
</comment>
<comment type="PTM">
    <text evidence="1">Phosphorylation at Ser-295 of the FFAT motif activates interaction with MOSPD2.</text>
</comment>
<comment type="disruption phenotype">
    <text evidence="4 5">Mitochondrial fragmentation: mitochondria become round and show loss of cristae (PubMed:26711011). Female mice show decreased quality of oocytes (PubMed:26716412). Mice lacking both Miga1 and Miga2 show strongly reduced quality of oocytes and are subfertile (PubMed:26716412).</text>
</comment>
<comment type="similarity">
    <text evidence="7">Belongs to the mitoguardin family.</text>
</comment>
<comment type="sequence caution" evidence="7">
    <conflict type="erroneous initiation">
        <sequence resource="EMBL-CDS" id="BAE32434"/>
    </conflict>
    <text>Extended N-terminus.</text>
</comment>
<proteinExistence type="evidence at protein level"/>
<gene>
    <name evidence="1 8" type="primary">Miga2</name>
    <name evidence="1" type="synonym">Fam73b</name>
</gene>
<sequence>MAFRRTEGMSMIQALAMTVAEIPVFLYTTFGQSAFSQLRLTPGLRKVLFATALGTVALALAAHQLKRRRRKKKQVGPEMGGEQLGTVPMPILMARKVPSVKKGCSSRRVQSPSSKSNDTLSGISSIEPSKHSGSSHSLASMVVVNSSSPTAACSGSWEARGMEESVPTTDGSAESLYVQGMELFEEALQKWEQALSVGQRGDGGSTPTPGDSLQNPDTASEALSEPESQRREFAEKLESLLHRAYHLQEEFGSTFPSDSMLLDLERTLMLPLTEGSLRLRADDEDSLTSEDSFFSATEIFESLQIGEYPLPLSRPAAAYEEALQLVKEGRVPCRTLRTELLGCYSDQDFLAKLHCVRQAFEGLLEERSNQIFFGEVGRQMVTGLMTKAEKSPKGFLESYEEMLSYALRPETWATTRLELEGRGVACMSFFDIVLDFILMDAFEDLENPPSSVLAVLRNRWLSDSFKETALATACWSVLKAKRRLLMVPDGFISHFYSVSEHVSPVLAFGFLGPKPQLSEVCAFFKHQIVQYLRDMFDLDNVRYTSVPALAEDILQLSRRRSEILLGYLGAPVASSIGLNGPLPRENGPLEELQ</sequence>
<reference key="1">
    <citation type="journal article" date="2005" name="Science">
        <title>The transcriptional landscape of the mammalian genome.</title>
        <authorList>
            <person name="Carninci P."/>
            <person name="Kasukawa T."/>
            <person name="Katayama S."/>
            <person name="Gough J."/>
            <person name="Frith M.C."/>
            <person name="Maeda N."/>
            <person name="Oyama R."/>
            <person name="Ravasi T."/>
            <person name="Lenhard B."/>
            <person name="Wells C."/>
            <person name="Kodzius R."/>
            <person name="Shimokawa K."/>
            <person name="Bajic V.B."/>
            <person name="Brenner S.E."/>
            <person name="Batalov S."/>
            <person name="Forrest A.R."/>
            <person name="Zavolan M."/>
            <person name="Davis M.J."/>
            <person name="Wilming L.G."/>
            <person name="Aidinis V."/>
            <person name="Allen J.E."/>
            <person name="Ambesi-Impiombato A."/>
            <person name="Apweiler R."/>
            <person name="Aturaliya R.N."/>
            <person name="Bailey T.L."/>
            <person name="Bansal M."/>
            <person name="Baxter L."/>
            <person name="Beisel K.W."/>
            <person name="Bersano T."/>
            <person name="Bono H."/>
            <person name="Chalk A.M."/>
            <person name="Chiu K.P."/>
            <person name="Choudhary V."/>
            <person name="Christoffels A."/>
            <person name="Clutterbuck D.R."/>
            <person name="Crowe M.L."/>
            <person name="Dalla E."/>
            <person name="Dalrymple B.P."/>
            <person name="de Bono B."/>
            <person name="Della Gatta G."/>
            <person name="di Bernardo D."/>
            <person name="Down T."/>
            <person name="Engstrom P."/>
            <person name="Fagiolini M."/>
            <person name="Faulkner G."/>
            <person name="Fletcher C.F."/>
            <person name="Fukushima T."/>
            <person name="Furuno M."/>
            <person name="Futaki S."/>
            <person name="Gariboldi M."/>
            <person name="Georgii-Hemming P."/>
            <person name="Gingeras T.R."/>
            <person name="Gojobori T."/>
            <person name="Green R.E."/>
            <person name="Gustincich S."/>
            <person name="Harbers M."/>
            <person name="Hayashi Y."/>
            <person name="Hensch T.K."/>
            <person name="Hirokawa N."/>
            <person name="Hill D."/>
            <person name="Huminiecki L."/>
            <person name="Iacono M."/>
            <person name="Ikeo K."/>
            <person name="Iwama A."/>
            <person name="Ishikawa T."/>
            <person name="Jakt M."/>
            <person name="Kanapin A."/>
            <person name="Katoh M."/>
            <person name="Kawasawa Y."/>
            <person name="Kelso J."/>
            <person name="Kitamura H."/>
            <person name="Kitano H."/>
            <person name="Kollias G."/>
            <person name="Krishnan S.P."/>
            <person name="Kruger A."/>
            <person name="Kummerfeld S.K."/>
            <person name="Kurochkin I.V."/>
            <person name="Lareau L.F."/>
            <person name="Lazarevic D."/>
            <person name="Lipovich L."/>
            <person name="Liu J."/>
            <person name="Liuni S."/>
            <person name="McWilliam S."/>
            <person name="Madan Babu M."/>
            <person name="Madera M."/>
            <person name="Marchionni L."/>
            <person name="Matsuda H."/>
            <person name="Matsuzawa S."/>
            <person name="Miki H."/>
            <person name="Mignone F."/>
            <person name="Miyake S."/>
            <person name="Morris K."/>
            <person name="Mottagui-Tabar S."/>
            <person name="Mulder N."/>
            <person name="Nakano N."/>
            <person name="Nakauchi H."/>
            <person name="Ng P."/>
            <person name="Nilsson R."/>
            <person name="Nishiguchi S."/>
            <person name="Nishikawa S."/>
            <person name="Nori F."/>
            <person name="Ohara O."/>
            <person name="Okazaki Y."/>
            <person name="Orlando V."/>
            <person name="Pang K.C."/>
            <person name="Pavan W.J."/>
            <person name="Pavesi G."/>
            <person name="Pesole G."/>
            <person name="Petrovsky N."/>
            <person name="Piazza S."/>
            <person name="Reed J."/>
            <person name="Reid J.F."/>
            <person name="Ring B.Z."/>
            <person name="Ringwald M."/>
            <person name="Rost B."/>
            <person name="Ruan Y."/>
            <person name="Salzberg S.L."/>
            <person name="Sandelin A."/>
            <person name="Schneider C."/>
            <person name="Schoenbach C."/>
            <person name="Sekiguchi K."/>
            <person name="Semple C.A."/>
            <person name="Seno S."/>
            <person name="Sessa L."/>
            <person name="Sheng Y."/>
            <person name="Shibata Y."/>
            <person name="Shimada H."/>
            <person name="Shimada K."/>
            <person name="Silva D."/>
            <person name="Sinclair B."/>
            <person name="Sperling S."/>
            <person name="Stupka E."/>
            <person name="Sugiura K."/>
            <person name="Sultana R."/>
            <person name="Takenaka Y."/>
            <person name="Taki K."/>
            <person name="Tammoja K."/>
            <person name="Tan S.L."/>
            <person name="Tang S."/>
            <person name="Taylor M.S."/>
            <person name="Tegner J."/>
            <person name="Teichmann S.A."/>
            <person name="Ueda H.R."/>
            <person name="van Nimwegen E."/>
            <person name="Verardo R."/>
            <person name="Wei C.L."/>
            <person name="Yagi K."/>
            <person name="Yamanishi H."/>
            <person name="Zabarovsky E."/>
            <person name="Zhu S."/>
            <person name="Zimmer A."/>
            <person name="Hide W."/>
            <person name="Bult C."/>
            <person name="Grimmond S.M."/>
            <person name="Teasdale R.D."/>
            <person name="Liu E.T."/>
            <person name="Brusic V."/>
            <person name="Quackenbush J."/>
            <person name="Wahlestedt C."/>
            <person name="Mattick J.S."/>
            <person name="Hume D.A."/>
            <person name="Kai C."/>
            <person name="Sasaki D."/>
            <person name="Tomaru Y."/>
            <person name="Fukuda S."/>
            <person name="Kanamori-Katayama M."/>
            <person name="Suzuki M."/>
            <person name="Aoki J."/>
            <person name="Arakawa T."/>
            <person name="Iida J."/>
            <person name="Imamura K."/>
            <person name="Itoh M."/>
            <person name="Kato T."/>
            <person name="Kawaji H."/>
            <person name="Kawagashira N."/>
            <person name="Kawashima T."/>
            <person name="Kojima M."/>
            <person name="Kondo S."/>
            <person name="Konno H."/>
            <person name="Nakano K."/>
            <person name="Ninomiya N."/>
            <person name="Nishio T."/>
            <person name="Okada M."/>
            <person name="Plessy C."/>
            <person name="Shibata K."/>
            <person name="Shiraki T."/>
            <person name="Suzuki S."/>
            <person name="Tagami M."/>
            <person name="Waki K."/>
            <person name="Watahiki A."/>
            <person name="Okamura-Oho Y."/>
            <person name="Suzuki H."/>
            <person name="Kawai J."/>
            <person name="Hayashizaki Y."/>
        </authorList>
    </citation>
    <scope>NUCLEOTIDE SEQUENCE [LARGE SCALE MRNA] (ISOFORMS 1 AND 2)</scope>
    <source>
        <strain>C57BL/6J</strain>
        <strain>NOD</strain>
        <tissue>Corpora quadrigemina</tissue>
        <tissue>Dendritic cell</tissue>
        <tissue>Embryo</tissue>
    </source>
</reference>
<reference key="2">
    <citation type="journal article" date="2009" name="PLoS Biol.">
        <title>Lineage-specific biology revealed by a finished genome assembly of the mouse.</title>
        <authorList>
            <person name="Church D.M."/>
            <person name="Goodstadt L."/>
            <person name="Hillier L.W."/>
            <person name="Zody M.C."/>
            <person name="Goldstein S."/>
            <person name="She X."/>
            <person name="Bult C.J."/>
            <person name="Agarwala R."/>
            <person name="Cherry J.L."/>
            <person name="DiCuccio M."/>
            <person name="Hlavina W."/>
            <person name="Kapustin Y."/>
            <person name="Meric P."/>
            <person name="Maglott D."/>
            <person name="Birtle Z."/>
            <person name="Marques A.C."/>
            <person name="Graves T."/>
            <person name="Zhou S."/>
            <person name="Teague B."/>
            <person name="Potamousis K."/>
            <person name="Churas C."/>
            <person name="Place M."/>
            <person name="Herschleb J."/>
            <person name="Runnheim R."/>
            <person name="Forrest D."/>
            <person name="Amos-Landgraf J."/>
            <person name="Schwartz D.C."/>
            <person name="Cheng Z."/>
            <person name="Lindblad-Toh K."/>
            <person name="Eichler E.E."/>
            <person name="Ponting C.P."/>
        </authorList>
    </citation>
    <scope>NUCLEOTIDE SEQUENCE [LARGE SCALE GENOMIC DNA]</scope>
    <source>
        <strain>C57BL/6J</strain>
    </source>
</reference>
<reference key="3">
    <citation type="journal article" date="2004" name="Genome Res.">
        <title>The status, quality, and expansion of the NIH full-length cDNA project: the Mammalian Gene Collection (MGC).</title>
        <authorList>
            <consortium name="The MGC Project Team"/>
        </authorList>
    </citation>
    <scope>NUCLEOTIDE SEQUENCE [LARGE SCALE MRNA] (ISOFORM 1)</scope>
    <source>
        <strain>FVB/N</strain>
        <tissue>Colon</tissue>
    </source>
</reference>
<reference key="4">
    <citation type="journal article" date="2007" name="Proc. Natl. Acad. Sci. U.S.A.">
        <title>Large-scale phosphorylation analysis of mouse liver.</title>
        <authorList>
            <person name="Villen J."/>
            <person name="Beausoleil S.A."/>
            <person name="Gerber S.A."/>
            <person name="Gygi S.P."/>
        </authorList>
    </citation>
    <scope>PHOSPHORYLATION [LARGE SCALE ANALYSIS] AT SER-224 AND SER-228</scope>
    <scope>IDENTIFICATION BY MASS SPECTROMETRY [LARGE SCALE ANALYSIS]</scope>
    <source>
        <tissue>Liver</tissue>
    </source>
</reference>
<reference key="5">
    <citation type="journal article" date="2010" name="Cell">
        <title>A tissue-specific atlas of mouse protein phosphorylation and expression.</title>
        <authorList>
            <person name="Huttlin E.L."/>
            <person name="Jedrychowski M.P."/>
            <person name="Elias J.E."/>
            <person name="Goswami T."/>
            <person name="Rad R."/>
            <person name="Beausoleil S.A."/>
            <person name="Villen J."/>
            <person name="Haas W."/>
            <person name="Sowa M.E."/>
            <person name="Gygi S.P."/>
        </authorList>
    </citation>
    <scope>PHOSPHORYLATION [LARGE SCALE ANALYSIS] AT SER-132; THR-206; SER-220; SER-224; SER-228; THR-273 AND SER-276</scope>
    <scope>IDENTIFICATION BY MASS SPECTROMETRY [LARGE SCALE ANALYSIS]</scope>
    <source>
        <tissue>Brain</tissue>
        <tissue>Brown adipose tissue</tissue>
        <tissue>Heart</tissue>
        <tissue>Kidney</tissue>
        <tissue>Liver</tissue>
        <tissue>Lung</tissue>
        <tissue>Spleen</tissue>
        <tissue>Testis</tissue>
    </source>
</reference>
<reference key="6">
    <citation type="journal article" date="2016" name="Mol. Cell">
        <title>Mitoguardin regulates mitochondrial fusion through MitoPLD and is required for neuronal homeostasis.</title>
        <authorList>
            <person name="Zhang Y."/>
            <person name="Liu X."/>
            <person name="Bai J."/>
            <person name="Tian X."/>
            <person name="Zhao X."/>
            <person name="Liu W."/>
            <person name="Duan X."/>
            <person name="Shang W."/>
            <person name="Fan H.Y."/>
            <person name="Tong C."/>
        </authorList>
    </citation>
    <scope>FUNCTION</scope>
    <scope>DISRUPTION PHENOTYPE</scope>
</reference>
<reference key="7">
    <citation type="journal article" date="2016" name="Oncotarget">
        <title>Mitoguardin-1 and -2 promote maturation and the developmental potential of mouse oocytes by maintaining mitochondrial dynamics and functions.</title>
        <authorList>
            <person name="Liu X.M."/>
            <person name="Zhang Y.P."/>
            <person name="Ji S.Y."/>
            <person name="Li B.T."/>
            <person name="Tian X."/>
            <person name="Li D."/>
            <person name="Tong C."/>
            <person name="Fan H.Y."/>
        </authorList>
    </citation>
    <scope>DISRUPTION PHENOTYPE</scope>
</reference>
<name>MIGA2_MOUSE</name>
<accession>Q8BK03</accession>
<accession>A6PX05</accession>
<accession>Q3U4J7</accession>
<accession>Q3UST7</accession>
<feature type="chain" id="PRO_0000313659" description="Mitoguardin 2">
    <location>
        <begin position="1"/>
        <end position="593"/>
    </location>
</feature>
<feature type="transmembrane region" description="Helical" evidence="2">
    <location>
        <begin position="11"/>
        <end position="31"/>
    </location>
</feature>
<feature type="transmembrane region" description="Helical" evidence="2">
    <location>
        <begin position="42"/>
        <end position="62"/>
    </location>
</feature>
<feature type="region of interest" description="Disordered" evidence="3">
    <location>
        <begin position="98"/>
        <end position="134"/>
    </location>
</feature>
<feature type="region of interest" description="Disordered" evidence="3">
    <location>
        <begin position="150"/>
        <end position="171"/>
    </location>
</feature>
<feature type="region of interest" description="Disordered" evidence="3">
    <location>
        <begin position="197"/>
        <end position="229"/>
    </location>
</feature>
<feature type="short sequence motif" description="FFAT" evidence="1">
    <location>
        <begin position="292"/>
        <end position="298"/>
    </location>
</feature>
<feature type="compositionally biased region" description="Low complexity" evidence="3">
    <location>
        <begin position="106"/>
        <end position="116"/>
    </location>
</feature>
<feature type="compositionally biased region" description="Low complexity" evidence="3">
    <location>
        <begin position="124"/>
        <end position="134"/>
    </location>
</feature>
<feature type="compositionally biased region" description="Polar residues" evidence="3">
    <location>
        <begin position="205"/>
        <end position="218"/>
    </location>
</feature>
<feature type="modified residue" description="Phosphoserine" evidence="10">
    <location>
        <position position="132"/>
    </location>
</feature>
<feature type="modified residue" description="Phosphothreonine" evidence="10">
    <location>
        <position position="206"/>
    </location>
</feature>
<feature type="modified residue" description="Phosphoserine" evidence="10">
    <location>
        <position position="220"/>
    </location>
</feature>
<feature type="modified residue" description="Phosphoserine" evidence="9 10">
    <location>
        <position position="224"/>
    </location>
</feature>
<feature type="modified residue" description="Phosphoserine" evidence="9 10">
    <location>
        <position position="228"/>
    </location>
</feature>
<feature type="modified residue" description="Phosphothreonine" evidence="10">
    <location>
        <position position="273"/>
    </location>
</feature>
<feature type="modified residue" description="Phosphoserine" evidence="10">
    <location>
        <position position="276"/>
    </location>
</feature>
<feature type="modified residue" description="Phosphoserine" evidence="1">
    <location>
        <position position="295"/>
    </location>
</feature>
<feature type="splice variant" id="VSP_030093" description="In isoform 2." evidence="6">
    <original>SPKGFLESYEEMLSYALRPETWATTRLELEGRGVACMSFFDIVLDFILMDAFE</original>
    <variation>VAGVGLLQIPLRTLPQAGLLLCFVLFCRLLTGFLTQKSWACEVTQWVQDWQPE</variation>
    <location>
        <begin position="391"/>
        <end position="443"/>
    </location>
</feature>
<feature type="splice variant" id="VSP_030094" description="In isoform 2." evidence="6">
    <location>
        <begin position="444"/>
        <end position="593"/>
    </location>
</feature>
<organism>
    <name type="scientific">Mus musculus</name>
    <name type="common">Mouse</name>
    <dbReference type="NCBI Taxonomy" id="10090"/>
    <lineage>
        <taxon>Eukaryota</taxon>
        <taxon>Metazoa</taxon>
        <taxon>Chordata</taxon>
        <taxon>Craniata</taxon>
        <taxon>Vertebrata</taxon>
        <taxon>Euteleostomi</taxon>
        <taxon>Mammalia</taxon>
        <taxon>Eutheria</taxon>
        <taxon>Euarchontoglires</taxon>
        <taxon>Glires</taxon>
        <taxon>Rodentia</taxon>
        <taxon>Myomorpha</taxon>
        <taxon>Muroidea</taxon>
        <taxon>Muridae</taxon>
        <taxon>Murinae</taxon>
        <taxon>Mus</taxon>
        <taxon>Mus</taxon>
    </lineage>
</organism>